<organism>
    <name type="scientific">Clostridium kluyveri (strain NBRC 12016)</name>
    <dbReference type="NCBI Taxonomy" id="583346"/>
    <lineage>
        <taxon>Bacteria</taxon>
        <taxon>Bacillati</taxon>
        <taxon>Bacillota</taxon>
        <taxon>Clostridia</taxon>
        <taxon>Eubacteriales</taxon>
        <taxon>Clostridiaceae</taxon>
        <taxon>Clostridium</taxon>
    </lineage>
</organism>
<comment type="function">
    <text evidence="1">One of the primary rRNA binding proteins, it binds directly to 16S rRNA where it helps nucleate assembly of the platform of the 30S subunit by binding and bridging several RNA helices of the 16S rRNA.</text>
</comment>
<comment type="function">
    <text evidence="1">Forms an intersubunit bridge (bridge B4) with the 23S rRNA of the 50S subunit in the ribosome.</text>
</comment>
<comment type="subunit">
    <text evidence="1">Part of the 30S ribosomal subunit. Forms a bridge to the 50S subunit in the 70S ribosome, contacting the 23S rRNA.</text>
</comment>
<comment type="similarity">
    <text evidence="1">Belongs to the universal ribosomal protein uS15 family.</text>
</comment>
<feature type="chain" id="PRO_1000166413" description="Small ribosomal subunit protein uS15">
    <location>
        <begin position="1"/>
        <end position="87"/>
    </location>
</feature>
<reference key="1">
    <citation type="submission" date="2005-09" db="EMBL/GenBank/DDBJ databases">
        <title>Complete genome sequence of Clostridium kluyveri and comparative genomics of Clostridia species.</title>
        <authorList>
            <person name="Inui M."/>
            <person name="Nonaka H."/>
            <person name="Shinoda Y."/>
            <person name="Ikenaga Y."/>
            <person name="Abe M."/>
            <person name="Naito K."/>
            <person name="Vertes A.A."/>
            <person name="Yukawa H."/>
        </authorList>
    </citation>
    <scope>NUCLEOTIDE SEQUENCE [LARGE SCALE GENOMIC DNA]</scope>
    <source>
        <strain>NBRC 12016</strain>
    </source>
</reference>
<dbReference type="EMBL" id="AP009049">
    <property type="protein sequence ID" value="BAH06382.1"/>
    <property type="molecule type" value="Genomic_DNA"/>
</dbReference>
<dbReference type="RefSeq" id="WP_012101825.1">
    <property type="nucleotide sequence ID" value="NC_011837.1"/>
</dbReference>
<dbReference type="SMR" id="B9E1K7"/>
<dbReference type="KEGG" id="ckr:CKR_1331"/>
<dbReference type="HOGENOM" id="CLU_148518_0_0_9"/>
<dbReference type="Proteomes" id="UP000007969">
    <property type="component" value="Chromosome"/>
</dbReference>
<dbReference type="GO" id="GO:0022627">
    <property type="term" value="C:cytosolic small ribosomal subunit"/>
    <property type="evidence" value="ECO:0007669"/>
    <property type="project" value="TreeGrafter"/>
</dbReference>
<dbReference type="GO" id="GO:0019843">
    <property type="term" value="F:rRNA binding"/>
    <property type="evidence" value="ECO:0007669"/>
    <property type="project" value="UniProtKB-UniRule"/>
</dbReference>
<dbReference type="GO" id="GO:0003735">
    <property type="term" value="F:structural constituent of ribosome"/>
    <property type="evidence" value="ECO:0007669"/>
    <property type="project" value="InterPro"/>
</dbReference>
<dbReference type="GO" id="GO:0006412">
    <property type="term" value="P:translation"/>
    <property type="evidence" value="ECO:0007669"/>
    <property type="project" value="UniProtKB-UniRule"/>
</dbReference>
<dbReference type="CDD" id="cd00353">
    <property type="entry name" value="Ribosomal_S15p_S13e"/>
    <property type="match status" value="1"/>
</dbReference>
<dbReference type="FunFam" id="1.10.287.10:FF:000002">
    <property type="entry name" value="30S ribosomal protein S15"/>
    <property type="match status" value="1"/>
</dbReference>
<dbReference type="Gene3D" id="6.10.250.3130">
    <property type="match status" value="1"/>
</dbReference>
<dbReference type="Gene3D" id="1.10.287.10">
    <property type="entry name" value="S15/NS1, RNA-binding"/>
    <property type="match status" value="1"/>
</dbReference>
<dbReference type="HAMAP" id="MF_01343_B">
    <property type="entry name" value="Ribosomal_uS15_B"/>
    <property type="match status" value="1"/>
</dbReference>
<dbReference type="InterPro" id="IPR000589">
    <property type="entry name" value="Ribosomal_uS15"/>
</dbReference>
<dbReference type="InterPro" id="IPR005290">
    <property type="entry name" value="Ribosomal_uS15_bac-type"/>
</dbReference>
<dbReference type="InterPro" id="IPR009068">
    <property type="entry name" value="uS15_NS1_RNA-bd_sf"/>
</dbReference>
<dbReference type="NCBIfam" id="TIGR00952">
    <property type="entry name" value="S15_bact"/>
    <property type="match status" value="1"/>
</dbReference>
<dbReference type="PANTHER" id="PTHR23321">
    <property type="entry name" value="RIBOSOMAL PROTEIN S15, BACTERIAL AND ORGANELLAR"/>
    <property type="match status" value="1"/>
</dbReference>
<dbReference type="PANTHER" id="PTHR23321:SF26">
    <property type="entry name" value="SMALL RIBOSOMAL SUBUNIT PROTEIN US15M"/>
    <property type="match status" value="1"/>
</dbReference>
<dbReference type="Pfam" id="PF00312">
    <property type="entry name" value="Ribosomal_S15"/>
    <property type="match status" value="1"/>
</dbReference>
<dbReference type="SMART" id="SM01387">
    <property type="entry name" value="Ribosomal_S15"/>
    <property type="match status" value="1"/>
</dbReference>
<dbReference type="SUPFAM" id="SSF47060">
    <property type="entry name" value="S15/NS1 RNA-binding domain"/>
    <property type="match status" value="1"/>
</dbReference>
<dbReference type="PROSITE" id="PS00362">
    <property type="entry name" value="RIBOSOMAL_S15"/>
    <property type="match status" value="1"/>
</dbReference>
<name>RS15_CLOK1</name>
<gene>
    <name evidence="1" type="primary">rpsO</name>
    <name type="ordered locus">CKR_1331</name>
</gene>
<protein>
    <recommendedName>
        <fullName evidence="1">Small ribosomal subunit protein uS15</fullName>
    </recommendedName>
    <alternativeName>
        <fullName evidence="2">30S ribosomal protein S15</fullName>
    </alternativeName>
</protein>
<evidence type="ECO:0000255" key="1">
    <source>
        <dbReference type="HAMAP-Rule" id="MF_01343"/>
    </source>
</evidence>
<evidence type="ECO:0000305" key="2"/>
<accession>B9E1K7</accession>
<proteinExistence type="inferred from homology"/>
<keyword id="KW-0687">Ribonucleoprotein</keyword>
<keyword id="KW-0689">Ribosomal protein</keyword>
<keyword id="KW-0694">RNA-binding</keyword>
<keyword id="KW-0699">rRNA-binding</keyword>
<sequence>MEKAVKQEIMEKYARHEGDTGSPEVQIALLTTRINHLNEHLKIHKKDHHSRRGLLMMVGKRRGLLNYLIKQDIERYRAIIKALNLRK</sequence>